<accession>B5E375</accession>
<protein>
    <recommendedName>
        <fullName evidence="1">Small ribosomal subunit protein bS16</fullName>
    </recommendedName>
    <alternativeName>
        <fullName evidence="2">30S ribosomal protein S16</fullName>
    </alternativeName>
</protein>
<sequence>MAVKIRLTRMGSKKKPFYRINVADSRSPRDGRFIETVGTYNPLVAENQVTLKEDRVLTWLANGAQPSDTVRNILSKEGVLKKFHDSKFSK</sequence>
<feature type="chain" id="PRO_1000196479" description="Small ribosomal subunit protein bS16">
    <location>
        <begin position="1"/>
        <end position="90"/>
    </location>
</feature>
<comment type="similarity">
    <text evidence="1">Belongs to the bacterial ribosomal protein bS16 family.</text>
</comment>
<proteinExistence type="inferred from homology"/>
<evidence type="ECO:0000255" key="1">
    <source>
        <dbReference type="HAMAP-Rule" id="MF_00385"/>
    </source>
</evidence>
<evidence type="ECO:0000305" key="2"/>
<organism>
    <name type="scientific">Streptococcus pneumoniae serotype 19F (strain G54)</name>
    <dbReference type="NCBI Taxonomy" id="512566"/>
    <lineage>
        <taxon>Bacteria</taxon>
        <taxon>Bacillati</taxon>
        <taxon>Bacillota</taxon>
        <taxon>Bacilli</taxon>
        <taxon>Lactobacillales</taxon>
        <taxon>Streptococcaceae</taxon>
        <taxon>Streptococcus</taxon>
    </lineage>
</organism>
<keyword id="KW-0687">Ribonucleoprotein</keyword>
<keyword id="KW-0689">Ribosomal protein</keyword>
<dbReference type="EMBL" id="CP001015">
    <property type="protein sequence ID" value="ACF56701.1"/>
    <property type="molecule type" value="Genomic_DNA"/>
</dbReference>
<dbReference type="SMR" id="B5E375"/>
<dbReference type="KEGG" id="spx:SPG_0705"/>
<dbReference type="HOGENOM" id="CLU_100590_5_0_9"/>
<dbReference type="GO" id="GO:0005737">
    <property type="term" value="C:cytoplasm"/>
    <property type="evidence" value="ECO:0007669"/>
    <property type="project" value="UniProtKB-ARBA"/>
</dbReference>
<dbReference type="GO" id="GO:0015935">
    <property type="term" value="C:small ribosomal subunit"/>
    <property type="evidence" value="ECO:0007669"/>
    <property type="project" value="TreeGrafter"/>
</dbReference>
<dbReference type="GO" id="GO:0003735">
    <property type="term" value="F:structural constituent of ribosome"/>
    <property type="evidence" value="ECO:0007669"/>
    <property type="project" value="InterPro"/>
</dbReference>
<dbReference type="GO" id="GO:0006412">
    <property type="term" value="P:translation"/>
    <property type="evidence" value="ECO:0007669"/>
    <property type="project" value="UniProtKB-UniRule"/>
</dbReference>
<dbReference type="FunFam" id="3.30.1320.10:FF:000002">
    <property type="entry name" value="30S ribosomal protein S16"/>
    <property type="match status" value="1"/>
</dbReference>
<dbReference type="Gene3D" id="3.30.1320.10">
    <property type="match status" value="1"/>
</dbReference>
<dbReference type="HAMAP" id="MF_00385">
    <property type="entry name" value="Ribosomal_bS16"/>
    <property type="match status" value="1"/>
</dbReference>
<dbReference type="InterPro" id="IPR000307">
    <property type="entry name" value="Ribosomal_bS16"/>
</dbReference>
<dbReference type="InterPro" id="IPR023803">
    <property type="entry name" value="Ribosomal_bS16_dom_sf"/>
</dbReference>
<dbReference type="NCBIfam" id="TIGR00002">
    <property type="entry name" value="S16"/>
    <property type="match status" value="1"/>
</dbReference>
<dbReference type="PANTHER" id="PTHR12919">
    <property type="entry name" value="30S RIBOSOMAL PROTEIN S16"/>
    <property type="match status" value="1"/>
</dbReference>
<dbReference type="PANTHER" id="PTHR12919:SF20">
    <property type="entry name" value="SMALL RIBOSOMAL SUBUNIT PROTEIN BS16M"/>
    <property type="match status" value="1"/>
</dbReference>
<dbReference type="Pfam" id="PF00886">
    <property type="entry name" value="Ribosomal_S16"/>
    <property type="match status" value="1"/>
</dbReference>
<dbReference type="SUPFAM" id="SSF54565">
    <property type="entry name" value="Ribosomal protein S16"/>
    <property type="match status" value="1"/>
</dbReference>
<gene>
    <name evidence="1" type="primary">rpsP</name>
    <name type="ordered locus">SPG_0705</name>
</gene>
<reference key="1">
    <citation type="journal article" date="2001" name="Microb. Drug Resist.">
        <title>Annotated draft genomic sequence from a Streptococcus pneumoniae type 19F clinical isolate.</title>
        <authorList>
            <person name="Dopazo J."/>
            <person name="Mendoza A."/>
            <person name="Herrero J."/>
            <person name="Caldara F."/>
            <person name="Humbert Y."/>
            <person name="Friedli L."/>
            <person name="Guerrier M."/>
            <person name="Grand-Schenk E."/>
            <person name="Gandin C."/>
            <person name="de Francesco M."/>
            <person name="Polissi A."/>
            <person name="Buell G."/>
            <person name="Feger G."/>
            <person name="Garcia E."/>
            <person name="Peitsch M."/>
            <person name="Garcia-Bustos J.F."/>
        </authorList>
    </citation>
    <scope>NUCLEOTIDE SEQUENCE [LARGE SCALE GENOMIC DNA]</scope>
    <source>
        <strain>G54</strain>
    </source>
</reference>
<reference key="2">
    <citation type="submission" date="2008-03" db="EMBL/GenBank/DDBJ databases">
        <title>Pneumococcal beta glucoside metabolism investigated by whole genome comparison.</title>
        <authorList>
            <person name="Mulas L."/>
            <person name="Trappetti C."/>
            <person name="Hakenbeck R."/>
            <person name="Iannelli F."/>
            <person name="Pozzi G."/>
            <person name="Davidsen T.M."/>
            <person name="Tettelin H."/>
            <person name="Oggioni M."/>
        </authorList>
    </citation>
    <scope>NUCLEOTIDE SEQUENCE [LARGE SCALE GENOMIC DNA]</scope>
    <source>
        <strain>G54</strain>
    </source>
</reference>
<name>RS16_STRP4</name>